<dbReference type="EC" id="6.1.1.1" evidence="1"/>
<dbReference type="EMBL" id="AE005673">
    <property type="protein sequence ID" value="AAK23845.1"/>
    <property type="molecule type" value="Genomic_DNA"/>
</dbReference>
<dbReference type="PIR" id="A87481">
    <property type="entry name" value="A87481"/>
</dbReference>
<dbReference type="RefSeq" id="NP_420677.1">
    <property type="nucleotide sequence ID" value="NC_002696.2"/>
</dbReference>
<dbReference type="SMR" id="Q9A756"/>
<dbReference type="STRING" id="190650.CC_1870"/>
<dbReference type="EnsemblBacteria" id="AAK23845">
    <property type="protein sequence ID" value="AAK23845"/>
    <property type="gene ID" value="CC_1870"/>
</dbReference>
<dbReference type="KEGG" id="ccr:CC_1870"/>
<dbReference type="PATRIC" id="fig|190650.5.peg.1887"/>
<dbReference type="eggNOG" id="COG0162">
    <property type="taxonomic scope" value="Bacteria"/>
</dbReference>
<dbReference type="HOGENOM" id="CLU_024003_0_3_5"/>
<dbReference type="BioCyc" id="CAULO:CC1870-MONOMER"/>
<dbReference type="Proteomes" id="UP000001816">
    <property type="component" value="Chromosome"/>
</dbReference>
<dbReference type="GO" id="GO:0005829">
    <property type="term" value="C:cytosol"/>
    <property type="evidence" value="ECO:0007669"/>
    <property type="project" value="TreeGrafter"/>
</dbReference>
<dbReference type="GO" id="GO:0005524">
    <property type="term" value="F:ATP binding"/>
    <property type="evidence" value="ECO:0007669"/>
    <property type="project" value="UniProtKB-UniRule"/>
</dbReference>
<dbReference type="GO" id="GO:0003723">
    <property type="term" value="F:RNA binding"/>
    <property type="evidence" value="ECO:0007669"/>
    <property type="project" value="UniProtKB-KW"/>
</dbReference>
<dbReference type="GO" id="GO:0004831">
    <property type="term" value="F:tyrosine-tRNA ligase activity"/>
    <property type="evidence" value="ECO:0007669"/>
    <property type="project" value="UniProtKB-UniRule"/>
</dbReference>
<dbReference type="GO" id="GO:0006437">
    <property type="term" value="P:tyrosyl-tRNA aminoacylation"/>
    <property type="evidence" value="ECO:0007669"/>
    <property type="project" value="UniProtKB-UniRule"/>
</dbReference>
<dbReference type="CDD" id="cd00165">
    <property type="entry name" value="S4"/>
    <property type="match status" value="1"/>
</dbReference>
<dbReference type="CDD" id="cd00805">
    <property type="entry name" value="TyrRS_core"/>
    <property type="match status" value="1"/>
</dbReference>
<dbReference type="FunFam" id="1.10.240.10:FF:000001">
    <property type="entry name" value="Tyrosine--tRNA ligase"/>
    <property type="match status" value="1"/>
</dbReference>
<dbReference type="Gene3D" id="3.40.50.620">
    <property type="entry name" value="HUPs"/>
    <property type="match status" value="1"/>
</dbReference>
<dbReference type="Gene3D" id="3.10.290.10">
    <property type="entry name" value="RNA-binding S4 domain"/>
    <property type="match status" value="1"/>
</dbReference>
<dbReference type="Gene3D" id="1.10.240.10">
    <property type="entry name" value="Tyrosyl-Transfer RNA Synthetase"/>
    <property type="match status" value="1"/>
</dbReference>
<dbReference type="HAMAP" id="MF_02006">
    <property type="entry name" value="Tyr_tRNA_synth_type1"/>
    <property type="match status" value="1"/>
</dbReference>
<dbReference type="InterPro" id="IPR002305">
    <property type="entry name" value="aa-tRNA-synth_Ic"/>
</dbReference>
<dbReference type="InterPro" id="IPR014729">
    <property type="entry name" value="Rossmann-like_a/b/a_fold"/>
</dbReference>
<dbReference type="InterPro" id="IPR036986">
    <property type="entry name" value="S4_RNA-bd_sf"/>
</dbReference>
<dbReference type="InterPro" id="IPR002307">
    <property type="entry name" value="Tyr-tRNA-ligase"/>
</dbReference>
<dbReference type="InterPro" id="IPR024088">
    <property type="entry name" value="Tyr-tRNA-ligase_bac-type"/>
</dbReference>
<dbReference type="InterPro" id="IPR024107">
    <property type="entry name" value="Tyr-tRNA-ligase_bac_1"/>
</dbReference>
<dbReference type="NCBIfam" id="TIGR00234">
    <property type="entry name" value="tyrS"/>
    <property type="match status" value="1"/>
</dbReference>
<dbReference type="PANTHER" id="PTHR11766:SF0">
    <property type="entry name" value="TYROSINE--TRNA LIGASE, MITOCHONDRIAL"/>
    <property type="match status" value="1"/>
</dbReference>
<dbReference type="PANTHER" id="PTHR11766">
    <property type="entry name" value="TYROSYL-TRNA SYNTHETASE"/>
    <property type="match status" value="1"/>
</dbReference>
<dbReference type="Pfam" id="PF00579">
    <property type="entry name" value="tRNA-synt_1b"/>
    <property type="match status" value="1"/>
</dbReference>
<dbReference type="PRINTS" id="PR01040">
    <property type="entry name" value="TRNASYNTHTYR"/>
</dbReference>
<dbReference type="SUPFAM" id="SSF55174">
    <property type="entry name" value="Alpha-L RNA-binding motif"/>
    <property type="match status" value="1"/>
</dbReference>
<dbReference type="SUPFAM" id="SSF52374">
    <property type="entry name" value="Nucleotidylyl transferase"/>
    <property type="match status" value="1"/>
</dbReference>
<dbReference type="PROSITE" id="PS50889">
    <property type="entry name" value="S4"/>
    <property type="match status" value="1"/>
</dbReference>
<gene>
    <name evidence="1" type="primary">tyrS</name>
    <name type="ordered locus">CC_1870</name>
</gene>
<sequence length="419" mass="45407">MSAASSFKSEFLRTLEARGYIHQITHADELDTAAQGGPIVAYIGFDATAPSLHVGSLIQIMLLRRLQQAGHKPIVLMGGGTTKVGDPTGKDESRKLLSDADIQANIAGIKTVFSKFLTFGDGPTDAIMVDNDVWLSKFGYVQFLREYGVHFTVNRMLAFDSVKLRLEREQPMTFLEFNYMLMQAVDFLELNRAHGCVLQMGGSDQWGNILNGVELTRRVDQKSAFGLTTPLLATASGAKMGKTAAGAVWLNAEQLSPYDYWQFWRNTEDADVGRFLKLFTDLPLDRIAELEALEGAQINEAKKVLADEATRMAHGEEEARKARDAAEKAFEQGALSADLPTYEIAAADLDAGVVLAALFADAGLAGSRGEARRLAQGGGLKVNDKAEADANRLITAADLVEGVVKLAAGKKKIVLVKPV</sequence>
<organism>
    <name type="scientific">Caulobacter vibrioides (strain ATCC 19089 / CIP 103742 / CB 15)</name>
    <name type="common">Caulobacter crescentus</name>
    <dbReference type="NCBI Taxonomy" id="190650"/>
    <lineage>
        <taxon>Bacteria</taxon>
        <taxon>Pseudomonadati</taxon>
        <taxon>Pseudomonadota</taxon>
        <taxon>Alphaproteobacteria</taxon>
        <taxon>Caulobacterales</taxon>
        <taxon>Caulobacteraceae</taxon>
        <taxon>Caulobacter</taxon>
    </lineage>
</organism>
<comment type="function">
    <text evidence="1">Catalyzes the attachment of tyrosine to tRNA(Tyr) in a two-step reaction: tyrosine is first activated by ATP to form Tyr-AMP and then transferred to the acceptor end of tRNA(Tyr).</text>
</comment>
<comment type="catalytic activity">
    <reaction evidence="1">
        <text>tRNA(Tyr) + L-tyrosine + ATP = L-tyrosyl-tRNA(Tyr) + AMP + diphosphate + H(+)</text>
        <dbReference type="Rhea" id="RHEA:10220"/>
        <dbReference type="Rhea" id="RHEA-COMP:9706"/>
        <dbReference type="Rhea" id="RHEA-COMP:9707"/>
        <dbReference type="ChEBI" id="CHEBI:15378"/>
        <dbReference type="ChEBI" id="CHEBI:30616"/>
        <dbReference type="ChEBI" id="CHEBI:33019"/>
        <dbReference type="ChEBI" id="CHEBI:58315"/>
        <dbReference type="ChEBI" id="CHEBI:78442"/>
        <dbReference type="ChEBI" id="CHEBI:78536"/>
        <dbReference type="ChEBI" id="CHEBI:456215"/>
        <dbReference type="EC" id="6.1.1.1"/>
    </reaction>
</comment>
<comment type="subunit">
    <text evidence="1">Homodimer.</text>
</comment>
<comment type="subcellular location">
    <subcellularLocation>
        <location evidence="1">Cytoplasm</location>
    </subcellularLocation>
</comment>
<comment type="similarity">
    <text evidence="1">Belongs to the class-I aminoacyl-tRNA synthetase family. TyrS type 1 subfamily.</text>
</comment>
<keyword id="KW-0030">Aminoacyl-tRNA synthetase</keyword>
<keyword id="KW-0067">ATP-binding</keyword>
<keyword id="KW-0963">Cytoplasm</keyword>
<keyword id="KW-0436">Ligase</keyword>
<keyword id="KW-0547">Nucleotide-binding</keyword>
<keyword id="KW-0648">Protein biosynthesis</keyword>
<keyword id="KW-1185">Reference proteome</keyword>
<keyword id="KW-0694">RNA-binding</keyword>
<proteinExistence type="inferred from homology"/>
<feature type="chain" id="PRO_0000234692" description="Tyrosine--tRNA ligase">
    <location>
        <begin position="1"/>
        <end position="419"/>
    </location>
</feature>
<feature type="domain" description="S4 RNA-binding" evidence="1">
    <location>
        <begin position="353"/>
        <end position="418"/>
    </location>
</feature>
<feature type="short sequence motif" description="'HIGH' region">
    <location>
        <begin position="47"/>
        <end position="56"/>
    </location>
</feature>
<feature type="short sequence motif" description="'KMSKS' region">
    <location>
        <begin position="239"/>
        <end position="243"/>
    </location>
</feature>
<feature type="binding site" evidence="1">
    <location>
        <position position="42"/>
    </location>
    <ligand>
        <name>L-tyrosine</name>
        <dbReference type="ChEBI" id="CHEBI:58315"/>
    </ligand>
</feature>
<feature type="binding site" evidence="1">
    <location>
        <position position="179"/>
    </location>
    <ligand>
        <name>L-tyrosine</name>
        <dbReference type="ChEBI" id="CHEBI:58315"/>
    </ligand>
</feature>
<feature type="binding site" evidence="1">
    <location>
        <position position="183"/>
    </location>
    <ligand>
        <name>L-tyrosine</name>
        <dbReference type="ChEBI" id="CHEBI:58315"/>
    </ligand>
</feature>
<feature type="binding site" evidence="1">
    <location>
        <position position="242"/>
    </location>
    <ligand>
        <name>ATP</name>
        <dbReference type="ChEBI" id="CHEBI:30616"/>
    </ligand>
</feature>
<evidence type="ECO:0000255" key="1">
    <source>
        <dbReference type="HAMAP-Rule" id="MF_02006"/>
    </source>
</evidence>
<reference key="1">
    <citation type="journal article" date="2001" name="Proc. Natl. Acad. Sci. U.S.A.">
        <title>Complete genome sequence of Caulobacter crescentus.</title>
        <authorList>
            <person name="Nierman W.C."/>
            <person name="Feldblyum T.V."/>
            <person name="Laub M.T."/>
            <person name="Paulsen I.T."/>
            <person name="Nelson K.E."/>
            <person name="Eisen J.A."/>
            <person name="Heidelberg J.F."/>
            <person name="Alley M.R.K."/>
            <person name="Ohta N."/>
            <person name="Maddock J.R."/>
            <person name="Potocka I."/>
            <person name="Nelson W.C."/>
            <person name="Newton A."/>
            <person name="Stephens C."/>
            <person name="Phadke N.D."/>
            <person name="Ely B."/>
            <person name="DeBoy R.T."/>
            <person name="Dodson R.J."/>
            <person name="Durkin A.S."/>
            <person name="Gwinn M.L."/>
            <person name="Haft D.H."/>
            <person name="Kolonay J.F."/>
            <person name="Smit J."/>
            <person name="Craven M.B."/>
            <person name="Khouri H.M."/>
            <person name="Shetty J."/>
            <person name="Berry K.J."/>
            <person name="Utterback T.R."/>
            <person name="Tran K."/>
            <person name="Wolf A.M."/>
            <person name="Vamathevan J.J."/>
            <person name="Ermolaeva M.D."/>
            <person name="White O."/>
            <person name="Salzberg S.L."/>
            <person name="Venter J.C."/>
            <person name="Shapiro L."/>
            <person name="Fraser C.M."/>
        </authorList>
    </citation>
    <scope>NUCLEOTIDE SEQUENCE [LARGE SCALE GENOMIC DNA]</scope>
    <source>
        <strain>ATCC 19089 / CIP 103742 / CB 15</strain>
    </source>
</reference>
<protein>
    <recommendedName>
        <fullName evidence="1">Tyrosine--tRNA ligase</fullName>
        <ecNumber evidence="1">6.1.1.1</ecNumber>
    </recommendedName>
    <alternativeName>
        <fullName evidence="1">Tyrosyl-tRNA synthetase</fullName>
        <shortName evidence="1">TyrRS</shortName>
    </alternativeName>
</protein>
<name>SYY_CAUVC</name>
<accession>Q9A756</accession>